<organism>
    <name type="scientific">Actinobacillus pleuropneumoniae serotype 5b (strain L20)</name>
    <dbReference type="NCBI Taxonomy" id="416269"/>
    <lineage>
        <taxon>Bacteria</taxon>
        <taxon>Pseudomonadati</taxon>
        <taxon>Pseudomonadota</taxon>
        <taxon>Gammaproteobacteria</taxon>
        <taxon>Pasteurellales</taxon>
        <taxon>Pasteurellaceae</taxon>
        <taxon>Actinobacillus</taxon>
    </lineage>
</organism>
<protein>
    <recommendedName>
        <fullName evidence="1">UPF0231 protein APL_0968</fullName>
    </recommendedName>
</protein>
<evidence type="ECO:0000255" key="1">
    <source>
        <dbReference type="HAMAP-Rule" id="MF_01053"/>
    </source>
</evidence>
<proteinExistence type="inferred from homology"/>
<feature type="chain" id="PRO_1000064355" description="UPF0231 protein APL_0968">
    <location>
        <begin position="1"/>
        <end position="125"/>
    </location>
</feature>
<keyword id="KW-1185">Reference proteome</keyword>
<sequence>MEYQFTHSIHGVVAKCSMDHEAFAGWLNTEITENPKELINIFAEIEKCRAAYPNHYECVFEGKEYSLFLDCDEVMVKANNLDDTFDESQIEDGFQFYDQESIAFCGLEDFENFLKAYQKFSKTYH</sequence>
<gene>
    <name type="ordered locus">APL_0968</name>
</gene>
<accession>A3N0X6</accession>
<reference key="1">
    <citation type="journal article" date="2008" name="J. Bacteriol.">
        <title>The complete genome sequence of Actinobacillus pleuropneumoniae L20 (serotype 5b).</title>
        <authorList>
            <person name="Foote S.J."/>
            <person name="Bosse J.T."/>
            <person name="Bouevitch A.B."/>
            <person name="Langford P.R."/>
            <person name="Young N.M."/>
            <person name="Nash J.H.E."/>
        </authorList>
    </citation>
    <scope>NUCLEOTIDE SEQUENCE [LARGE SCALE GENOMIC DNA]</scope>
    <source>
        <strain>L20</strain>
    </source>
</reference>
<name>Y968_ACTP2</name>
<dbReference type="EMBL" id="CP000569">
    <property type="protein sequence ID" value="ABN74062.1"/>
    <property type="molecule type" value="Genomic_DNA"/>
</dbReference>
<dbReference type="RefSeq" id="WP_009875251.1">
    <property type="nucleotide sequence ID" value="NC_009053.1"/>
</dbReference>
<dbReference type="STRING" id="416269.APL_0968"/>
<dbReference type="EnsemblBacteria" id="ABN74062">
    <property type="protein sequence ID" value="ABN74062"/>
    <property type="gene ID" value="APL_0968"/>
</dbReference>
<dbReference type="KEGG" id="apl:APL_0968"/>
<dbReference type="PATRIC" id="fig|416269.6.peg.1013"/>
<dbReference type="eggNOG" id="COG3112">
    <property type="taxonomic scope" value="Bacteria"/>
</dbReference>
<dbReference type="HOGENOM" id="CLU_139226_0_0_6"/>
<dbReference type="Proteomes" id="UP000001432">
    <property type="component" value="Chromosome"/>
</dbReference>
<dbReference type="HAMAP" id="MF_01053">
    <property type="entry name" value="UPF0231"/>
    <property type="match status" value="1"/>
</dbReference>
<dbReference type="InterPro" id="IPR008249">
    <property type="entry name" value="UPF0231"/>
</dbReference>
<dbReference type="NCBIfam" id="NF003575">
    <property type="entry name" value="PRK05248.1-2"/>
    <property type="match status" value="1"/>
</dbReference>
<dbReference type="Pfam" id="PF06062">
    <property type="entry name" value="UPF0231"/>
    <property type="match status" value="1"/>
</dbReference>
<dbReference type="PIRSF" id="PIRSF006287">
    <property type="entry name" value="UCP006287"/>
    <property type="match status" value="1"/>
</dbReference>
<comment type="similarity">
    <text evidence="1">Belongs to the UPF0231 family.</text>
</comment>